<comment type="function">
    <text evidence="1">Excises uracil residues from the DNA which can arise as a result of misincorporation of dUMP residues by DNA polymerase or due to deamination of cytosine.</text>
</comment>
<comment type="catalytic activity">
    <reaction evidence="1">
        <text>Hydrolyzes single-stranded DNA or mismatched double-stranded DNA and polynucleotides, releasing free uracil.</text>
        <dbReference type="EC" id="3.2.2.27"/>
    </reaction>
</comment>
<comment type="subcellular location">
    <subcellularLocation>
        <location evidence="1">Cytoplasm</location>
    </subcellularLocation>
</comment>
<comment type="similarity">
    <text evidence="1">Belongs to the uracil-DNA glycosylase (UDG) superfamily. UNG family.</text>
</comment>
<feature type="chain" id="PRO_1000096600" description="Uracil-DNA glycosylase">
    <location>
        <begin position="1"/>
        <end position="263"/>
    </location>
</feature>
<feature type="active site" description="Proton acceptor" evidence="1">
    <location>
        <position position="94"/>
    </location>
</feature>
<proteinExistence type="inferred from homology"/>
<protein>
    <recommendedName>
        <fullName evidence="1">Uracil-DNA glycosylase</fullName>
        <shortName evidence="1">UDG</shortName>
        <ecNumber evidence="1">3.2.2.27</ecNumber>
    </recommendedName>
</protein>
<name>UNG_RALPJ</name>
<keyword id="KW-0963">Cytoplasm</keyword>
<keyword id="KW-0227">DNA damage</keyword>
<keyword id="KW-0234">DNA repair</keyword>
<keyword id="KW-0378">Hydrolase</keyword>
<accession>B2UDL1</accession>
<reference key="1">
    <citation type="submission" date="2008-05" db="EMBL/GenBank/DDBJ databases">
        <title>Complete sequence of chromosome 1 of Ralstonia pickettii 12J.</title>
        <authorList>
            <person name="Lucas S."/>
            <person name="Copeland A."/>
            <person name="Lapidus A."/>
            <person name="Glavina del Rio T."/>
            <person name="Dalin E."/>
            <person name="Tice H."/>
            <person name="Bruce D."/>
            <person name="Goodwin L."/>
            <person name="Pitluck S."/>
            <person name="Meincke L."/>
            <person name="Brettin T."/>
            <person name="Detter J.C."/>
            <person name="Han C."/>
            <person name="Kuske C.R."/>
            <person name="Schmutz J."/>
            <person name="Larimer F."/>
            <person name="Land M."/>
            <person name="Hauser L."/>
            <person name="Kyrpides N."/>
            <person name="Mikhailova N."/>
            <person name="Marsh T."/>
            <person name="Richardson P."/>
        </authorList>
    </citation>
    <scope>NUCLEOTIDE SEQUENCE [LARGE SCALE GENOMIC DNA]</scope>
    <source>
        <strain>12J</strain>
    </source>
</reference>
<gene>
    <name evidence="1" type="primary">ung</name>
    <name type="ordered locus">Rpic_3129</name>
</gene>
<evidence type="ECO:0000255" key="1">
    <source>
        <dbReference type="HAMAP-Rule" id="MF_00148"/>
    </source>
</evidence>
<dbReference type="EC" id="3.2.2.27" evidence="1"/>
<dbReference type="EMBL" id="CP001068">
    <property type="protein sequence ID" value="ACD28252.1"/>
    <property type="molecule type" value="Genomic_DNA"/>
</dbReference>
<dbReference type="SMR" id="B2UDL1"/>
<dbReference type="STRING" id="402626.Rpic_3129"/>
<dbReference type="KEGG" id="rpi:Rpic_3129"/>
<dbReference type="eggNOG" id="COG0692">
    <property type="taxonomic scope" value="Bacteria"/>
</dbReference>
<dbReference type="HOGENOM" id="CLU_032162_3_0_4"/>
<dbReference type="GO" id="GO:0005737">
    <property type="term" value="C:cytoplasm"/>
    <property type="evidence" value="ECO:0007669"/>
    <property type="project" value="UniProtKB-SubCell"/>
</dbReference>
<dbReference type="GO" id="GO:0004844">
    <property type="term" value="F:uracil DNA N-glycosylase activity"/>
    <property type="evidence" value="ECO:0007669"/>
    <property type="project" value="UniProtKB-UniRule"/>
</dbReference>
<dbReference type="GO" id="GO:0097510">
    <property type="term" value="P:base-excision repair, AP site formation via deaminated base removal"/>
    <property type="evidence" value="ECO:0007669"/>
    <property type="project" value="TreeGrafter"/>
</dbReference>
<dbReference type="CDD" id="cd10027">
    <property type="entry name" value="UDG-F1-like"/>
    <property type="match status" value="1"/>
</dbReference>
<dbReference type="Gene3D" id="3.40.470.10">
    <property type="entry name" value="Uracil-DNA glycosylase-like domain"/>
    <property type="match status" value="1"/>
</dbReference>
<dbReference type="HAMAP" id="MF_00148">
    <property type="entry name" value="UDG"/>
    <property type="match status" value="1"/>
</dbReference>
<dbReference type="InterPro" id="IPR002043">
    <property type="entry name" value="UDG_fam1"/>
</dbReference>
<dbReference type="InterPro" id="IPR018085">
    <property type="entry name" value="Ura-DNA_Glyclase_AS"/>
</dbReference>
<dbReference type="InterPro" id="IPR005122">
    <property type="entry name" value="Uracil-DNA_glycosylase-like"/>
</dbReference>
<dbReference type="InterPro" id="IPR036895">
    <property type="entry name" value="Uracil-DNA_glycosylase-like_sf"/>
</dbReference>
<dbReference type="NCBIfam" id="NF003588">
    <property type="entry name" value="PRK05254.1-1"/>
    <property type="match status" value="1"/>
</dbReference>
<dbReference type="NCBIfam" id="NF003589">
    <property type="entry name" value="PRK05254.1-2"/>
    <property type="match status" value="1"/>
</dbReference>
<dbReference type="NCBIfam" id="NF003591">
    <property type="entry name" value="PRK05254.1-4"/>
    <property type="match status" value="1"/>
</dbReference>
<dbReference type="NCBIfam" id="NF003592">
    <property type="entry name" value="PRK05254.1-5"/>
    <property type="match status" value="1"/>
</dbReference>
<dbReference type="NCBIfam" id="TIGR00628">
    <property type="entry name" value="ung"/>
    <property type="match status" value="1"/>
</dbReference>
<dbReference type="PANTHER" id="PTHR11264">
    <property type="entry name" value="URACIL-DNA GLYCOSYLASE"/>
    <property type="match status" value="1"/>
</dbReference>
<dbReference type="PANTHER" id="PTHR11264:SF0">
    <property type="entry name" value="URACIL-DNA GLYCOSYLASE"/>
    <property type="match status" value="1"/>
</dbReference>
<dbReference type="Pfam" id="PF03167">
    <property type="entry name" value="UDG"/>
    <property type="match status" value="1"/>
</dbReference>
<dbReference type="SMART" id="SM00986">
    <property type="entry name" value="UDG"/>
    <property type="match status" value="1"/>
</dbReference>
<dbReference type="SMART" id="SM00987">
    <property type="entry name" value="UreE_C"/>
    <property type="match status" value="1"/>
</dbReference>
<dbReference type="SUPFAM" id="SSF52141">
    <property type="entry name" value="Uracil-DNA glycosylase-like"/>
    <property type="match status" value="1"/>
</dbReference>
<dbReference type="PROSITE" id="PS00130">
    <property type="entry name" value="U_DNA_GLYCOSYLASE"/>
    <property type="match status" value="1"/>
</dbReference>
<organism>
    <name type="scientific">Ralstonia pickettii (strain 12J)</name>
    <dbReference type="NCBI Taxonomy" id="402626"/>
    <lineage>
        <taxon>Bacteria</taxon>
        <taxon>Pseudomonadati</taxon>
        <taxon>Pseudomonadota</taxon>
        <taxon>Betaproteobacteria</taxon>
        <taxon>Burkholderiales</taxon>
        <taxon>Burkholderiaceae</taxon>
        <taxon>Ralstonia</taxon>
    </lineage>
</organism>
<sequence length="263" mass="28582">MTRRANPAQAALFDEPAVDAADVSFIPLAQQFDALPADWKAVLTPCIAQTNWPELCAFVDGERAAGKPIFPTDVFRALHLTSVDDVRVVILGQDPYHGTGTVDGREIPQAHGLAFSVPAGVRVPPSLRNIYKEIEAEFGCKLPGTSGNLEGWAQQGVLLLNTVLTVEQGQAASHAKRGWERITDCLLEQLARVGHKRVFMLWGSHAQAKRALLSDGHLVLEAPHPSPLSAHRGFLGCGHFKTANDWLAAQRQPTIDWLKPQAA</sequence>